<proteinExistence type="inferred from homology"/>
<accession>Q8EFG7</accession>
<organism>
    <name type="scientific">Shewanella oneidensis (strain ATCC 700550 / JCM 31522 / CIP 106686 / LMG 19005 / NCIMB 14063 / MR-1)</name>
    <dbReference type="NCBI Taxonomy" id="211586"/>
    <lineage>
        <taxon>Bacteria</taxon>
        <taxon>Pseudomonadati</taxon>
        <taxon>Pseudomonadota</taxon>
        <taxon>Gammaproteobacteria</taxon>
        <taxon>Alteromonadales</taxon>
        <taxon>Shewanellaceae</taxon>
        <taxon>Shewanella</taxon>
    </lineage>
</organism>
<dbReference type="EC" id="1.3.1.-" evidence="1"/>
<dbReference type="EMBL" id="AE014299">
    <property type="protein sequence ID" value="AAN55056.1"/>
    <property type="molecule type" value="Genomic_DNA"/>
</dbReference>
<dbReference type="RefSeq" id="NP_717612.1">
    <property type="nucleotide sequence ID" value="NC_004347.2"/>
</dbReference>
<dbReference type="RefSeq" id="WP_011072090.1">
    <property type="nucleotide sequence ID" value="NC_004347.2"/>
</dbReference>
<dbReference type="SMR" id="Q8EFG7"/>
<dbReference type="STRING" id="211586.SO_2006"/>
<dbReference type="PaxDb" id="211586-SO_2006"/>
<dbReference type="KEGG" id="son:SO_2006"/>
<dbReference type="PATRIC" id="fig|211586.12.peg.1925"/>
<dbReference type="eggNOG" id="COG0042">
    <property type="taxonomic scope" value="Bacteria"/>
</dbReference>
<dbReference type="HOGENOM" id="CLU_013299_0_4_6"/>
<dbReference type="OrthoDB" id="5289281at2"/>
<dbReference type="PhylomeDB" id="Q8EFG7"/>
<dbReference type="BioCyc" id="SONE211586:G1GMP-1848-MONOMER"/>
<dbReference type="Proteomes" id="UP000008186">
    <property type="component" value="Chromosome"/>
</dbReference>
<dbReference type="GO" id="GO:0050660">
    <property type="term" value="F:flavin adenine dinucleotide binding"/>
    <property type="evidence" value="ECO:0007669"/>
    <property type="project" value="InterPro"/>
</dbReference>
<dbReference type="GO" id="GO:0010181">
    <property type="term" value="F:FMN binding"/>
    <property type="evidence" value="ECO:0007669"/>
    <property type="project" value="UniProtKB-UniRule"/>
</dbReference>
<dbReference type="GO" id="GO:0000049">
    <property type="term" value="F:tRNA binding"/>
    <property type="evidence" value="ECO:0007669"/>
    <property type="project" value="UniProtKB-UniRule"/>
</dbReference>
<dbReference type="GO" id="GO:0102262">
    <property type="term" value="F:tRNA-dihydrouridine16 synthase activity"/>
    <property type="evidence" value="ECO:0007669"/>
    <property type="project" value="RHEA"/>
</dbReference>
<dbReference type="CDD" id="cd02801">
    <property type="entry name" value="DUS_like_FMN"/>
    <property type="match status" value="1"/>
</dbReference>
<dbReference type="Gene3D" id="3.20.20.70">
    <property type="entry name" value="Aldolase class I"/>
    <property type="match status" value="1"/>
</dbReference>
<dbReference type="Gene3D" id="1.20.225.30">
    <property type="entry name" value="Dihydrouridine synthase, C-terminal recognition domain"/>
    <property type="match status" value="1"/>
</dbReference>
<dbReference type="HAMAP" id="MF_02043">
    <property type="entry name" value="DusC_subfam"/>
    <property type="match status" value="1"/>
</dbReference>
<dbReference type="InterPro" id="IPR013785">
    <property type="entry name" value="Aldolase_TIM"/>
</dbReference>
<dbReference type="InterPro" id="IPR035587">
    <property type="entry name" value="DUS-like_FMN-bd"/>
</dbReference>
<dbReference type="InterPro" id="IPR001269">
    <property type="entry name" value="DUS_fam"/>
</dbReference>
<dbReference type="InterPro" id="IPR032886">
    <property type="entry name" value="DusC"/>
</dbReference>
<dbReference type="InterPro" id="IPR042270">
    <property type="entry name" value="DusC_C"/>
</dbReference>
<dbReference type="PANTHER" id="PTHR11082">
    <property type="entry name" value="TRNA-DIHYDROURIDINE SYNTHASE"/>
    <property type="match status" value="1"/>
</dbReference>
<dbReference type="PANTHER" id="PTHR11082:SF26">
    <property type="entry name" value="TRNA-DIHYDROURIDINE(16) SYNTHASE"/>
    <property type="match status" value="1"/>
</dbReference>
<dbReference type="Pfam" id="PF01207">
    <property type="entry name" value="Dus"/>
    <property type="match status" value="1"/>
</dbReference>
<dbReference type="PIRSF" id="PIRSF006621">
    <property type="entry name" value="Dus"/>
    <property type="match status" value="1"/>
</dbReference>
<dbReference type="SUPFAM" id="SSF51395">
    <property type="entry name" value="FMN-linked oxidoreductases"/>
    <property type="match status" value="1"/>
</dbReference>
<keyword id="KW-0285">Flavoprotein</keyword>
<keyword id="KW-0288">FMN</keyword>
<keyword id="KW-0521">NADP</keyword>
<keyword id="KW-0560">Oxidoreductase</keyword>
<keyword id="KW-1185">Reference proteome</keyword>
<keyword id="KW-0694">RNA-binding</keyword>
<keyword id="KW-0819">tRNA processing</keyword>
<keyword id="KW-0820">tRNA-binding</keyword>
<gene>
    <name evidence="1" type="primary">dusC</name>
    <name type="ordered locus">SO_2006</name>
</gene>
<name>DUSC_SHEON</name>
<feature type="chain" id="PRO_0000162124" description="tRNA-dihydrouridine(16) synthase">
    <location>
        <begin position="1"/>
        <end position="315"/>
    </location>
</feature>
<feature type="active site" description="Proton donor" evidence="1">
    <location>
        <position position="98"/>
    </location>
</feature>
<feature type="binding site" evidence="1">
    <location>
        <begin position="7"/>
        <end position="9"/>
    </location>
    <ligand>
        <name>FMN</name>
        <dbReference type="ChEBI" id="CHEBI:58210"/>
    </ligand>
</feature>
<feature type="binding site" evidence="1">
    <location>
        <position position="68"/>
    </location>
    <ligand>
        <name>FMN</name>
        <dbReference type="ChEBI" id="CHEBI:58210"/>
    </ligand>
</feature>
<feature type="binding site" evidence="1">
    <location>
        <position position="139"/>
    </location>
    <ligand>
        <name>FMN</name>
        <dbReference type="ChEBI" id="CHEBI:58210"/>
    </ligand>
</feature>
<feature type="binding site" evidence="1">
    <location>
        <begin position="199"/>
        <end position="201"/>
    </location>
    <ligand>
        <name>FMN</name>
        <dbReference type="ChEBI" id="CHEBI:58210"/>
    </ligand>
</feature>
<feature type="binding site" evidence="1">
    <location>
        <begin position="223"/>
        <end position="224"/>
    </location>
    <ligand>
        <name>FMN</name>
        <dbReference type="ChEBI" id="CHEBI:58210"/>
    </ligand>
</feature>
<feature type="site" description="Interacts with tRNA; defines subfamily-specific binding signature" evidence="1">
    <location>
        <position position="35"/>
    </location>
</feature>
<feature type="site" description="Interacts with tRNA" evidence="1">
    <location>
        <position position="95"/>
    </location>
</feature>
<feature type="site" description="Interacts with tRNA" evidence="1">
    <location>
        <position position="176"/>
    </location>
</feature>
<feature type="site" description="Interacts with tRNA; defines subfamily-specific binding signature" evidence="1">
    <location>
        <position position="271"/>
    </location>
</feature>
<feature type="site" description="Interacts with tRNA; defines subfamily-specific binding signature" evidence="1">
    <location>
        <position position="273"/>
    </location>
</feature>
<feature type="site" description="Interacts with tRNA" evidence="1">
    <location>
        <position position="278"/>
    </location>
</feature>
<feature type="site" description="Interacts with tRNA; defines subfamily-specific binding signature" evidence="1">
    <location>
        <position position="294"/>
    </location>
</feature>
<comment type="function">
    <text evidence="1">Catalyzes the synthesis of 5,6-dihydrouridine (D), a modified base found in the D-loop of most tRNAs, via the reduction of the C5-C6 double bond in target uridines. Specifically modifies U16 in tRNAs.</text>
</comment>
<comment type="catalytic activity">
    <reaction evidence="1">
        <text>5,6-dihydrouridine(16) in tRNA + NADP(+) = uridine(16) in tRNA + NADPH + H(+)</text>
        <dbReference type="Rhea" id="RHEA:53376"/>
        <dbReference type="Rhea" id="RHEA-COMP:13543"/>
        <dbReference type="Rhea" id="RHEA-COMP:13544"/>
        <dbReference type="ChEBI" id="CHEBI:15378"/>
        <dbReference type="ChEBI" id="CHEBI:57783"/>
        <dbReference type="ChEBI" id="CHEBI:58349"/>
        <dbReference type="ChEBI" id="CHEBI:65315"/>
        <dbReference type="ChEBI" id="CHEBI:74443"/>
    </reaction>
</comment>
<comment type="catalytic activity">
    <reaction evidence="1">
        <text>5,6-dihydrouridine(16) in tRNA + NAD(+) = uridine(16) in tRNA + NADH + H(+)</text>
        <dbReference type="Rhea" id="RHEA:53380"/>
        <dbReference type="Rhea" id="RHEA-COMP:13543"/>
        <dbReference type="Rhea" id="RHEA-COMP:13544"/>
        <dbReference type="ChEBI" id="CHEBI:15378"/>
        <dbReference type="ChEBI" id="CHEBI:57540"/>
        <dbReference type="ChEBI" id="CHEBI:57945"/>
        <dbReference type="ChEBI" id="CHEBI:65315"/>
        <dbReference type="ChEBI" id="CHEBI:74443"/>
    </reaction>
</comment>
<comment type="cofactor">
    <cofactor evidence="1">
        <name>FMN</name>
        <dbReference type="ChEBI" id="CHEBI:58210"/>
    </cofactor>
</comment>
<comment type="similarity">
    <text evidence="1">Belongs to the Dus family. DusC subfamily.</text>
</comment>
<reference key="1">
    <citation type="journal article" date="2002" name="Nat. Biotechnol.">
        <title>Genome sequence of the dissimilatory metal ion-reducing bacterium Shewanella oneidensis.</title>
        <authorList>
            <person name="Heidelberg J.F."/>
            <person name="Paulsen I.T."/>
            <person name="Nelson K.E."/>
            <person name="Gaidos E.J."/>
            <person name="Nelson W.C."/>
            <person name="Read T.D."/>
            <person name="Eisen J.A."/>
            <person name="Seshadri R."/>
            <person name="Ward N.L."/>
            <person name="Methe B.A."/>
            <person name="Clayton R.A."/>
            <person name="Meyer T."/>
            <person name="Tsapin A."/>
            <person name="Scott J."/>
            <person name="Beanan M.J."/>
            <person name="Brinkac L.M."/>
            <person name="Daugherty S.C."/>
            <person name="DeBoy R.T."/>
            <person name="Dodson R.J."/>
            <person name="Durkin A.S."/>
            <person name="Haft D.H."/>
            <person name="Kolonay J.F."/>
            <person name="Madupu R."/>
            <person name="Peterson J.D."/>
            <person name="Umayam L.A."/>
            <person name="White O."/>
            <person name="Wolf A.M."/>
            <person name="Vamathevan J.J."/>
            <person name="Weidman J.F."/>
            <person name="Impraim M."/>
            <person name="Lee K."/>
            <person name="Berry K.J."/>
            <person name="Lee C."/>
            <person name="Mueller J."/>
            <person name="Khouri H.M."/>
            <person name="Gill J."/>
            <person name="Utterback T.R."/>
            <person name="McDonald L.A."/>
            <person name="Feldblyum T.V."/>
            <person name="Smith H.O."/>
            <person name="Venter J.C."/>
            <person name="Nealson K.H."/>
            <person name="Fraser C.M."/>
        </authorList>
    </citation>
    <scope>NUCLEOTIDE SEQUENCE [LARGE SCALE GENOMIC DNA]</scope>
    <source>
        <strain>ATCC 700550 / JCM 31522 / CIP 106686 / LMG 19005 / NCIMB 14063 / MR-1</strain>
    </source>
</reference>
<evidence type="ECO:0000255" key="1">
    <source>
        <dbReference type="HAMAP-Rule" id="MF_02043"/>
    </source>
</evidence>
<sequence>MRVILAPMEGVVDDLMRDILSSINPYDLLVTEFVRVVDQLLPEKVFLKLCPELLSGGYTPSGTPVRVQLLGQEPNCMAENAMRAIELGSHGVDANFGCPAKMVNRSNGGAVLLQYPNTIHDIVRAMRQAVPAEHPVTAKIRLGYEDKSLFMENALAVYEAGATELAIHARSKVDGYKPPAYWEYITEVRERLPIPVIANGEIWNRDDAKRCMQVTGCDSIMIGRGAISLPNLADTIKTGATPYSWADTLQLMLSYTQRELSGRKSDYYPARIKQWFSYLNRQYPEADTLFRELRIYKTTEEIVRVLEQAQHHLNQ</sequence>
<protein>
    <recommendedName>
        <fullName evidence="1">tRNA-dihydrouridine(16) synthase</fullName>
        <ecNumber evidence="1">1.3.1.-</ecNumber>
    </recommendedName>
    <alternativeName>
        <fullName evidence="1">U16-specific dihydrouridine synthase</fullName>
        <shortName evidence="1">U16-specific Dus</shortName>
    </alternativeName>
    <alternativeName>
        <fullName evidence="1">tRNA-dihydrouridine synthase C</fullName>
    </alternativeName>
</protein>